<gene>
    <name evidence="1" type="primary">ftsB</name>
    <name type="ordered locus">Smal_1453</name>
</gene>
<sequence length="117" mass="13172">MRDWRWMLLVLALLLGWLQYRFWFGPGNSGEVMMLEAQVTNQERDNEGLQQRNDALAAEVKDLKEGQSAIEERARSELGMIKPGEKFYRVVEDAPVHPVQPAAGVSAQVGEHPADVP</sequence>
<keyword id="KW-0131">Cell cycle</keyword>
<keyword id="KW-0132">Cell division</keyword>
<keyword id="KW-0997">Cell inner membrane</keyword>
<keyword id="KW-1003">Cell membrane</keyword>
<keyword id="KW-0175">Coiled coil</keyword>
<keyword id="KW-0472">Membrane</keyword>
<keyword id="KW-0812">Transmembrane</keyword>
<keyword id="KW-1133">Transmembrane helix</keyword>
<name>FTSB_STRM5</name>
<reference key="1">
    <citation type="submission" date="2008-06" db="EMBL/GenBank/DDBJ databases">
        <title>Complete sequence of Stenotrophomonas maltophilia R551-3.</title>
        <authorList>
            <consortium name="US DOE Joint Genome Institute"/>
            <person name="Lucas S."/>
            <person name="Copeland A."/>
            <person name="Lapidus A."/>
            <person name="Glavina del Rio T."/>
            <person name="Dalin E."/>
            <person name="Tice H."/>
            <person name="Pitluck S."/>
            <person name="Chain P."/>
            <person name="Malfatti S."/>
            <person name="Shin M."/>
            <person name="Vergez L."/>
            <person name="Lang D."/>
            <person name="Schmutz J."/>
            <person name="Larimer F."/>
            <person name="Land M."/>
            <person name="Hauser L."/>
            <person name="Kyrpides N."/>
            <person name="Mikhailova N."/>
            <person name="Taghavi S."/>
            <person name="Monchy S."/>
            <person name="Newman L."/>
            <person name="Vangronsveld J."/>
            <person name="van der Lelie D."/>
            <person name="Richardson P."/>
        </authorList>
    </citation>
    <scope>NUCLEOTIDE SEQUENCE [LARGE SCALE GENOMIC DNA]</scope>
    <source>
        <strain>R551-3</strain>
    </source>
</reference>
<evidence type="ECO:0000255" key="1">
    <source>
        <dbReference type="HAMAP-Rule" id="MF_00599"/>
    </source>
</evidence>
<dbReference type="EMBL" id="CP001111">
    <property type="protein sequence ID" value="ACF51158.1"/>
    <property type="molecule type" value="Genomic_DNA"/>
</dbReference>
<dbReference type="RefSeq" id="WP_004152846.1">
    <property type="nucleotide sequence ID" value="NC_011071.1"/>
</dbReference>
<dbReference type="SMR" id="B4SR87"/>
<dbReference type="STRING" id="391008.Smal_1453"/>
<dbReference type="KEGG" id="smt:Smal_1453"/>
<dbReference type="eggNOG" id="COG2919">
    <property type="taxonomic scope" value="Bacteria"/>
</dbReference>
<dbReference type="HOGENOM" id="CLU_134863_0_0_6"/>
<dbReference type="OrthoDB" id="7061211at2"/>
<dbReference type="Proteomes" id="UP000001867">
    <property type="component" value="Chromosome"/>
</dbReference>
<dbReference type="GO" id="GO:0032153">
    <property type="term" value="C:cell division site"/>
    <property type="evidence" value="ECO:0007669"/>
    <property type="project" value="UniProtKB-UniRule"/>
</dbReference>
<dbReference type="GO" id="GO:0030428">
    <property type="term" value="C:cell septum"/>
    <property type="evidence" value="ECO:0007669"/>
    <property type="project" value="TreeGrafter"/>
</dbReference>
<dbReference type="GO" id="GO:0005886">
    <property type="term" value="C:plasma membrane"/>
    <property type="evidence" value="ECO:0007669"/>
    <property type="project" value="UniProtKB-SubCell"/>
</dbReference>
<dbReference type="GO" id="GO:0043093">
    <property type="term" value="P:FtsZ-dependent cytokinesis"/>
    <property type="evidence" value="ECO:0007669"/>
    <property type="project" value="UniProtKB-UniRule"/>
</dbReference>
<dbReference type="HAMAP" id="MF_00599">
    <property type="entry name" value="FtsB"/>
    <property type="match status" value="1"/>
</dbReference>
<dbReference type="InterPro" id="IPR023081">
    <property type="entry name" value="Cell_div_FtsB"/>
</dbReference>
<dbReference type="InterPro" id="IPR007060">
    <property type="entry name" value="FtsL/DivIC"/>
</dbReference>
<dbReference type="NCBIfam" id="NF002058">
    <property type="entry name" value="PRK00888.1"/>
    <property type="match status" value="1"/>
</dbReference>
<dbReference type="PANTHER" id="PTHR37485">
    <property type="entry name" value="CELL DIVISION PROTEIN FTSB"/>
    <property type="match status" value="1"/>
</dbReference>
<dbReference type="PANTHER" id="PTHR37485:SF1">
    <property type="entry name" value="CELL DIVISION PROTEIN FTSB"/>
    <property type="match status" value="1"/>
</dbReference>
<dbReference type="Pfam" id="PF04977">
    <property type="entry name" value="DivIC"/>
    <property type="match status" value="1"/>
</dbReference>
<organism>
    <name type="scientific">Stenotrophomonas maltophilia (strain R551-3)</name>
    <dbReference type="NCBI Taxonomy" id="391008"/>
    <lineage>
        <taxon>Bacteria</taxon>
        <taxon>Pseudomonadati</taxon>
        <taxon>Pseudomonadota</taxon>
        <taxon>Gammaproteobacteria</taxon>
        <taxon>Lysobacterales</taxon>
        <taxon>Lysobacteraceae</taxon>
        <taxon>Stenotrophomonas</taxon>
        <taxon>Stenotrophomonas maltophilia group</taxon>
    </lineage>
</organism>
<proteinExistence type="inferred from homology"/>
<comment type="function">
    <text evidence="1">Essential cell division protein. May link together the upstream cell division proteins, which are predominantly cytoplasmic, with the downstream cell division proteins, which are predominantly periplasmic.</text>
</comment>
<comment type="subunit">
    <text evidence="1">Part of a complex composed of FtsB, FtsL and FtsQ.</text>
</comment>
<comment type="subcellular location">
    <subcellularLocation>
        <location evidence="1">Cell inner membrane</location>
        <topology evidence="1">Single-pass type II membrane protein</topology>
    </subcellularLocation>
    <text evidence="1">Localizes to the division septum.</text>
</comment>
<comment type="similarity">
    <text evidence="1">Belongs to the FtsB family.</text>
</comment>
<accession>B4SR87</accession>
<feature type="chain" id="PRO_1000129946" description="Cell division protein FtsB">
    <location>
        <begin position="1"/>
        <end position="117"/>
    </location>
</feature>
<feature type="topological domain" description="Cytoplasmic" evidence="1">
    <location>
        <begin position="1"/>
        <end position="6"/>
    </location>
</feature>
<feature type="transmembrane region" description="Helical" evidence="1">
    <location>
        <begin position="7"/>
        <end position="24"/>
    </location>
</feature>
<feature type="topological domain" description="Periplasmic" evidence="1">
    <location>
        <begin position="25"/>
        <end position="117"/>
    </location>
</feature>
<feature type="coiled-coil region" evidence="1">
    <location>
        <begin position="29"/>
        <end position="69"/>
    </location>
</feature>
<protein>
    <recommendedName>
        <fullName evidence="1">Cell division protein FtsB</fullName>
    </recommendedName>
</protein>